<protein>
    <recommendedName>
        <fullName evidence="1">NAD-dependent protein deacylase 2</fullName>
        <ecNumber evidence="1 2">2.3.1.286</ecNumber>
    </recommendedName>
    <alternativeName>
        <fullName evidence="1">Regulatory protein SIR2 homolog 2</fullName>
    </alternativeName>
</protein>
<name>NPD2_COREF</name>
<accession>Q8FRV5</accession>
<reference key="1">
    <citation type="journal article" date="2003" name="Genome Res.">
        <title>Comparative complete genome sequence analysis of the amino acid replacements responsible for the thermostability of Corynebacterium efficiens.</title>
        <authorList>
            <person name="Nishio Y."/>
            <person name="Nakamura Y."/>
            <person name="Kawarabayasi Y."/>
            <person name="Usuda Y."/>
            <person name="Kimura E."/>
            <person name="Sugimoto S."/>
            <person name="Matsui K."/>
            <person name="Yamagishi A."/>
            <person name="Kikuchi H."/>
            <person name="Ikeo K."/>
            <person name="Gojobori T."/>
        </authorList>
    </citation>
    <scope>NUCLEOTIDE SEQUENCE [LARGE SCALE GENOMIC DNA]</scope>
    <source>
        <strain>DSM 44549 / YS-314 / AJ 12310 / JCM 11189 / NBRC 100395</strain>
    </source>
</reference>
<sequence length="254" mass="28080">MDEHSIMQAVAVARGARNIEVFTGAGMSADSGLETYRDPETGVWSKVDPQAMASIDAWARDPEPMWAWYRWRAGQAMKARPNAGHETIAYWEGSHLVDAVHVTTQNIDNLHERAGSTEVTHLHGSLFEFRCSICSKPWRDDGDYPREPVERLAPPTCSLCGNPVRPGVVWFGEALPQEEWAVAERRMREADLVVIVGTSGIVYPAASLPVLAHQRGVPILEITPKETDLSRIATYSWRATAAEGLPALVRRLGV</sequence>
<feature type="chain" id="PRO_0000110309" description="NAD-dependent protein deacylase 2">
    <location>
        <begin position="1"/>
        <end position="254"/>
    </location>
</feature>
<feature type="domain" description="Deacetylase sirtuin-type" evidence="2">
    <location>
        <begin position="1"/>
        <end position="254"/>
    </location>
</feature>
<feature type="active site" description="Proton acceptor" evidence="2">
    <location>
        <position position="123"/>
    </location>
</feature>
<feature type="binding site" evidence="1">
    <location>
        <begin position="24"/>
        <end position="44"/>
    </location>
    <ligand>
        <name>NAD(+)</name>
        <dbReference type="ChEBI" id="CHEBI:57540"/>
    </ligand>
</feature>
<feature type="binding site" evidence="1">
    <location>
        <position position="69"/>
    </location>
    <ligand>
        <name>substrate</name>
    </ligand>
</feature>
<feature type="binding site" evidence="1">
    <location>
        <position position="72"/>
    </location>
    <ligand>
        <name>substrate</name>
    </ligand>
</feature>
<feature type="binding site" evidence="1">
    <location>
        <begin position="105"/>
        <end position="108"/>
    </location>
    <ligand>
        <name>NAD(+)</name>
        <dbReference type="ChEBI" id="CHEBI:57540"/>
    </ligand>
</feature>
<feature type="binding site" evidence="1">
    <location>
        <position position="131"/>
    </location>
    <ligand>
        <name>Zn(2+)</name>
        <dbReference type="ChEBI" id="CHEBI:29105"/>
    </ligand>
</feature>
<feature type="binding site" evidence="1">
    <location>
        <position position="134"/>
    </location>
    <ligand>
        <name>Zn(2+)</name>
        <dbReference type="ChEBI" id="CHEBI:29105"/>
    </ligand>
</feature>
<feature type="binding site" evidence="1">
    <location>
        <position position="157"/>
    </location>
    <ligand>
        <name>Zn(2+)</name>
        <dbReference type="ChEBI" id="CHEBI:29105"/>
    </ligand>
</feature>
<feature type="binding site" evidence="1">
    <location>
        <position position="160"/>
    </location>
    <ligand>
        <name>Zn(2+)</name>
        <dbReference type="ChEBI" id="CHEBI:29105"/>
    </ligand>
</feature>
<feature type="binding site" evidence="1">
    <location>
        <begin position="197"/>
        <end position="199"/>
    </location>
    <ligand>
        <name>NAD(+)</name>
        <dbReference type="ChEBI" id="CHEBI:57540"/>
    </ligand>
</feature>
<feature type="binding site" evidence="1">
    <location>
        <position position="241"/>
    </location>
    <ligand>
        <name>NAD(+)</name>
        <dbReference type="ChEBI" id="CHEBI:57540"/>
    </ligand>
</feature>
<keyword id="KW-0963">Cytoplasm</keyword>
<keyword id="KW-0479">Metal-binding</keyword>
<keyword id="KW-0520">NAD</keyword>
<keyword id="KW-1185">Reference proteome</keyword>
<keyword id="KW-0808">Transferase</keyword>
<keyword id="KW-0862">Zinc</keyword>
<evidence type="ECO:0000255" key="1">
    <source>
        <dbReference type="HAMAP-Rule" id="MF_01121"/>
    </source>
</evidence>
<evidence type="ECO:0000255" key="2">
    <source>
        <dbReference type="PROSITE-ProRule" id="PRU00236"/>
    </source>
</evidence>
<evidence type="ECO:0000305" key="3"/>
<gene>
    <name evidence="1" type="primary">cobB2</name>
    <name type="ordered locus">CE0653</name>
</gene>
<organism>
    <name type="scientific">Corynebacterium efficiens (strain DSM 44549 / YS-314 / AJ 12310 / JCM 11189 / NBRC 100395)</name>
    <dbReference type="NCBI Taxonomy" id="196164"/>
    <lineage>
        <taxon>Bacteria</taxon>
        <taxon>Bacillati</taxon>
        <taxon>Actinomycetota</taxon>
        <taxon>Actinomycetes</taxon>
        <taxon>Mycobacteriales</taxon>
        <taxon>Corynebacteriaceae</taxon>
        <taxon>Corynebacterium</taxon>
    </lineage>
</organism>
<proteinExistence type="inferred from homology"/>
<comment type="function">
    <text evidence="1">NAD-dependent lysine deacetylase and desuccinylase that specifically removes acetyl and succinyl groups on target proteins. Modulates the activities of several proteins which are inactive in their acylated form.</text>
</comment>
<comment type="catalytic activity">
    <reaction evidence="1">
        <text>N(6)-acetyl-L-lysyl-[protein] + NAD(+) + H2O = 2''-O-acetyl-ADP-D-ribose + nicotinamide + L-lysyl-[protein]</text>
        <dbReference type="Rhea" id="RHEA:43636"/>
        <dbReference type="Rhea" id="RHEA-COMP:9752"/>
        <dbReference type="Rhea" id="RHEA-COMP:10731"/>
        <dbReference type="ChEBI" id="CHEBI:15377"/>
        <dbReference type="ChEBI" id="CHEBI:17154"/>
        <dbReference type="ChEBI" id="CHEBI:29969"/>
        <dbReference type="ChEBI" id="CHEBI:57540"/>
        <dbReference type="ChEBI" id="CHEBI:61930"/>
        <dbReference type="ChEBI" id="CHEBI:83767"/>
        <dbReference type="EC" id="2.3.1.286"/>
    </reaction>
</comment>
<comment type="catalytic activity">
    <reaction evidence="1">
        <text>N(6)-succinyl-L-lysyl-[protein] + NAD(+) + H2O = 2''-O-succinyl-ADP-D-ribose + nicotinamide + L-lysyl-[protein]</text>
        <dbReference type="Rhea" id="RHEA:47668"/>
        <dbReference type="Rhea" id="RHEA-COMP:9752"/>
        <dbReference type="Rhea" id="RHEA-COMP:11877"/>
        <dbReference type="ChEBI" id="CHEBI:15377"/>
        <dbReference type="ChEBI" id="CHEBI:17154"/>
        <dbReference type="ChEBI" id="CHEBI:29969"/>
        <dbReference type="ChEBI" id="CHEBI:57540"/>
        <dbReference type="ChEBI" id="CHEBI:87830"/>
        <dbReference type="ChEBI" id="CHEBI:87832"/>
    </reaction>
</comment>
<comment type="cofactor">
    <cofactor evidence="1">
        <name>Zn(2+)</name>
        <dbReference type="ChEBI" id="CHEBI:29105"/>
    </cofactor>
    <text evidence="1">Binds 1 zinc ion per subunit.</text>
</comment>
<comment type="subcellular location">
    <subcellularLocation>
        <location evidence="1">Cytoplasm</location>
    </subcellularLocation>
</comment>
<comment type="domain">
    <text evidence="1">2 residues (Tyr-69 and Arg-72) present in a large hydrophobic pocket are probably involved in substrate specificity. They are important for desuccinylation activity, but dispensable for deacetylation activity.</text>
</comment>
<comment type="similarity">
    <text evidence="1">Belongs to the sirtuin family. Class III subfamily.</text>
</comment>
<comment type="sequence caution" evidence="3">
    <conflict type="erroneous initiation">
        <sequence resource="EMBL-CDS" id="BAC17463"/>
    </conflict>
    <text>Extended N-terminus.</text>
</comment>
<dbReference type="EC" id="2.3.1.286" evidence="1 2"/>
<dbReference type="EMBL" id="BA000035">
    <property type="protein sequence ID" value="BAC17463.1"/>
    <property type="status" value="ALT_INIT"/>
    <property type="molecule type" value="Genomic_DNA"/>
</dbReference>
<dbReference type="RefSeq" id="WP_006769668.1">
    <property type="nucleotide sequence ID" value="NC_004369.1"/>
</dbReference>
<dbReference type="SMR" id="Q8FRV5"/>
<dbReference type="STRING" id="196164.gene:10741055"/>
<dbReference type="KEGG" id="cef:CE0653"/>
<dbReference type="eggNOG" id="COG0846">
    <property type="taxonomic scope" value="Bacteria"/>
</dbReference>
<dbReference type="HOGENOM" id="CLU_023643_3_1_11"/>
<dbReference type="OrthoDB" id="9800582at2"/>
<dbReference type="Proteomes" id="UP000001409">
    <property type="component" value="Chromosome"/>
</dbReference>
<dbReference type="GO" id="GO:0005737">
    <property type="term" value="C:cytoplasm"/>
    <property type="evidence" value="ECO:0007669"/>
    <property type="project" value="UniProtKB-SubCell"/>
</dbReference>
<dbReference type="GO" id="GO:0017136">
    <property type="term" value="F:histone deacetylase activity, NAD-dependent"/>
    <property type="evidence" value="ECO:0007669"/>
    <property type="project" value="TreeGrafter"/>
</dbReference>
<dbReference type="GO" id="GO:0070403">
    <property type="term" value="F:NAD+ binding"/>
    <property type="evidence" value="ECO:0007669"/>
    <property type="project" value="UniProtKB-UniRule"/>
</dbReference>
<dbReference type="GO" id="GO:0036054">
    <property type="term" value="F:protein-malonyllysine demalonylase activity"/>
    <property type="evidence" value="ECO:0007669"/>
    <property type="project" value="InterPro"/>
</dbReference>
<dbReference type="GO" id="GO:0036055">
    <property type="term" value="F:protein-succinyllysine desuccinylase activity"/>
    <property type="evidence" value="ECO:0007669"/>
    <property type="project" value="UniProtKB-UniRule"/>
</dbReference>
<dbReference type="GO" id="GO:0008270">
    <property type="term" value="F:zinc ion binding"/>
    <property type="evidence" value="ECO:0007669"/>
    <property type="project" value="UniProtKB-UniRule"/>
</dbReference>
<dbReference type="CDD" id="cd01412">
    <property type="entry name" value="SIRT5_Af1_CobB"/>
    <property type="match status" value="1"/>
</dbReference>
<dbReference type="Gene3D" id="3.30.1600.10">
    <property type="entry name" value="SIR2/SIRT2 'Small Domain"/>
    <property type="match status" value="1"/>
</dbReference>
<dbReference type="Gene3D" id="3.40.50.1220">
    <property type="entry name" value="TPP-binding domain"/>
    <property type="match status" value="1"/>
</dbReference>
<dbReference type="HAMAP" id="MF_01121">
    <property type="entry name" value="Sirtuin_ClassIII"/>
    <property type="match status" value="1"/>
</dbReference>
<dbReference type="InterPro" id="IPR029035">
    <property type="entry name" value="DHS-like_NAD/FAD-binding_dom"/>
</dbReference>
<dbReference type="InterPro" id="IPR050134">
    <property type="entry name" value="NAD-dep_sirtuin_deacylases"/>
</dbReference>
<dbReference type="InterPro" id="IPR003000">
    <property type="entry name" value="Sirtuin"/>
</dbReference>
<dbReference type="InterPro" id="IPR026591">
    <property type="entry name" value="Sirtuin_cat_small_dom_sf"/>
</dbReference>
<dbReference type="InterPro" id="IPR027546">
    <property type="entry name" value="Sirtuin_class_III"/>
</dbReference>
<dbReference type="InterPro" id="IPR026590">
    <property type="entry name" value="Ssirtuin_cat_dom"/>
</dbReference>
<dbReference type="NCBIfam" id="NF001753">
    <property type="entry name" value="PRK00481.1-3"/>
    <property type="match status" value="1"/>
</dbReference>
<dbReference type="PANTHER" id="PTHR11085">
    <property type="entry name" value="NAD-DEPENDENT PROTEIN DEACYLASE SIRTUIN-5, MITOCHONDRIAL-RELATED"/>
    <property type="match status" value="1"/>
</dbReference>
<dbReference type="PANTHER" id="PTHR11085:SF10">
    <property type="entry name" value="NAD-DEPENDENT PROTEIN DEACYLASE SIRTUIN-5, MITOCHONDRIAL-RELATED"/>
    <property type="match status" value="1"/>
</dbReference>
<dbReference type="Pfam" id="PF02146">
    <property type="entry name" value="SIR2"/>
    <property type="match status" value="1"/>
</dbReference>
<dbReference type="SUPFAM" id="SSF52467">
    <property type="entry name" value="DHS-like NAD/FAD-binding domain"/>
    <property type="match status" value="1"/>
</dbReference>
<dbReference type="PROSITE" id="PS50305">
    <property type="entry name" value="SIRTUIN"/>
    <property type="match status" value="1"/>
</dbReference>